<comment type="function">
    <text evidence="1">Involved in the gluconeogenesis. Catalyzes stereospecifically the conversion of dihydroxyacetone phosphate (DHAP) to D-glyceraldehyde-3-phosphate (G3P).</text>
</comment>
<comment type="catalytic activity">
    <reaction evidence="1">
        <text>D-glyceraldehyde 3-phosphate = dihydroxyacetone phosphate</text>
        <dbReference type="Rhea" id="RHEA:18585"/>
        <dbReference type="ChEBI" id="CHEBI:57642"/>
        <dbReference type="ChEBI" id="CHEBI:59776"/>
        <dbReference type="EC" id="5.3.1.1"/>
    </reaction>
</comment>
<comment type="pathway">
    <text evidence="1">Carbohydrate biosynthesis; gluconeogenesis.</text>
</comment>
<comment type="pathway">
    <text evidence="1">Carbohydrate degradation; glycolysis; D-glyceraldehyde 3-phosphate from glycerone phosphate: step 1/1.</text>
</comment>
<comment type="subunit">
    <text evidence="1">Homodimer.</text>
</comment>
<comment type="subcellular location">
    <subcellularLocation>
        <location evidence="1">Cytoplasm</location>
    </subcellularLocation>
</comment>
<comment type="similarity">
    <text evidence="1">Belongs to the triosephosphate isomerase family.</text>
</comment>
<evidence type="ECO:0000255" key="1">
    <source>
        <dbReference type="HAMAP-Rule" id="MF_00147"/>
    </source>
</evidence>
<accession>Q8G0F7</accession>
<accession>G0KA60</accession>
<dbReference type="EC" id="5.3.1.1" evidence="1"/>
<dbReference type="EMBL" id="AE014291">
    <property type="protein sequence ID" value="AAN30058.1"/>
    <property type="molecule type" value="Genomic_DNA"/>
</dbReference>
<dbReference type="EMBL" id="CP002997">
    <property type="protein sequence ID" value="AEM18476.1"/>
    <property type="molecule type" value="Genomic_DNA"/>
</dbReference>
<dbReference type="RefSeq" id="WP_002964266.1">
    <property type="nucleotide sequence ID" value="NZ_KN046804.1"/>
</dbReference>
<dbReference type="SMR" id="Q8G0F7"/>
<dbReference type="GeneID" id="97533610"/>
<dbReference type="KEGG" id="bms:BR1138"/>
<dbReference type="KEGG" id="bsi:BS1330_I1134"/>
<dbReference type="PATRIC" id="fig|204722.21.peg.1983"/>
<dbReference type="HOGENOM" id="CLU_024251_2_1_5"/>
<dbReference type="PhylomeDB" id="Q8G0F7"/>
<dbReference type="UniPathway" id="UPA00109">
    <property type="reaction ID" value="UER00189"/>
</dbReference>
<dbReference type="UniPathway" id="UPA00138"/>
<dbReference type="Proteomes" id="UP000007104">
    <property type="component" value="Chromosome I"/>
</dbReference>
<dbReference type="GO" id="GO:0005829">
    <property type="term" value="C:cytosol"/>
    <property type="evidence" value="ECO:0007669"/>
    <property type="project" value="TreeGrafter"/>
</dbReference>
<dbReference type="GO" id="GO:0004807">
    <property type="term" value="F:triose-phosphate isomerase activity"/>
    <property type="evidence" value="ECO:0007669"/>
    <property type="project" value="UniProtKB-UniRule"/>
</dbReference>
<dbReference type="GO" id="GO:0006094">
    <property type="term" value="P:gluconeogenesis"/>
    <property type="evidence" value="ECO:0007669"/>
    <property type="project" value="UniProtKB-UniRule"/>
</dbReference>
<dbReference type="GO" id="GO:0046166">
    <property type="term" value="P:glyceraldehyde-3-phosphate biosynthetic process"/>
    <property type="evidence" value="ECO:0007669"/>
    <property type="project" value="TreeGrafter"/>
</dbReference>
<dbReference type="GO" id="GO:0019563">
    <property type="term" value="P:glycerol catabolic process"/>
    <property type="evidence" value="ECO:0007669"/>
    <property type="project" value="TreeGrafter"/>
</dbReference>
<dbReference type="GO" id="GO:0006096">
    <property type="term" value="P:glycolytic process"/>
    <property type="evidence" value="ECO:0007669"/>
    <property type="project" value="UniProtKB-UniRule"/>
</dbReference>
<dbReference type="CDD" id="cd00311">
    <property type="entry name" value="TIM"/>
    <property type="match status" value="1"/>
</dbReference>
<dbReference type="FunFam" id="3.20.20.70:FF:000016">
    <property type="entry name" value="Triosephosphate isomerase"/>
    <property type="match status" value="1"/>
</dbReference>
<dbReference type="Gene3D" id="3.20.20.70">
    <property type="entry name" value="Aldolase class I"/>
    <property type="match status" value="1"/>
</dbReference>
<dbReference type="HAMAP" id="MF_00147_B">
    <property type="entry name" value="TIM_B"/>
    <property type="match status" value="1"/>
</dbReference>
<dbReference type="InterPro" id="IPR013785">
    <property type="entry name" value="Aldolase_TIM"/>
</dbReference>
<dbReference type="InterPro" id="IPR035990">
    <property type="entry name" value="TIM_sf"/>
</dbReference>
<dbReference type="InterPro" id="IPR022896">
    <property type="entry name" value="TrioseP_Isoase_bac/euk"/>
</dbReference>
<dbReference type="InterPro" id="IPR000652">
    <property type="entry name" value="Triosephosphate_isomerase"/>
</dbReference>
<dbReference type="InterPro" id="IPR020861">
    <property type="entry name" value="Triosephosphate_isomerase_AS"/>
</dbReference>
<dbReference type="NCBIfam" id="TIGR00419">
    <property type="entry name" value="tim"/>
    <property type="match status" value="1"/>
</dbReference>
<dbReference type="PANTHER" id="PTHR21139">
    <property type="entry name" value="TRIOSEPHOSPHATE ISOMERASE"/>
    <property type="match status" value="1"/>
</dbReference>
<dbReference type="PANTHER" id="PTHR21139:SF42">
    <property type="entry name" value="TRIOSEPHOSPHATE ISOMERASE"/>
    <property type="match status" value="1"/>
</dbReference>
<dbReference type="Pfam" id="PF00121">
    <property type="entry name" value="TIM"/>
    <property type="match status" value="1"/>
</dbReference>
<dbReference type="SUPFAM" id="SSF51351">
    <property type="entry name" value="Triosephosphate isomerase (TIM)"/>
    <property type="match status" value="1"/>
</dbReference>
<dbReference type="PROSITE" id="PS00171">
    <property type="entry name" value="TIM_1"/>
    <property type="match status" value="1"/>
</dbReference>
<dbReference type="PROSITE" id="PS51440">
    <property type="entry name" value="TIM_2"/>
    <property type="match status" value="1"/>
</dbReference>
<keyword id="KW-0963">Cytoplasm</keyword>
<keyword id="KW-0312">Gluconeogenesis</keyword>
<keyword id="KW-0324">Glycolysis</keyword>
<keyword id="KW-0413">Isomerase</keyword>
<protein>
    <recommendedName>
        <fullName evidence="1">Triosephosphate isomerase</fullName>
        <shortName evidence="1">TIM</shortName>
        <shortName evidence="1">TPI</shortName>
        <ecNumber evidence="1">5.3.1.1</ecNumber>
    </recommendedName>
    <alternativeName>
        <fullName evidence="1">Triose-phosphate isomerase</fullName>
    </alternativeName>
</protein>
<name>TPIS_BRUSU</name>
<gene>
    <name evidence="1" type="primary">tpiA</name>
    <name type="synonym">tpiA-1</name>
    <name type="ordered locus">BR1138</name>
    <name type="ordered locus">BS1330_I1134</name>
</gene>
<proteinExistence type="inferred from homology"/>
<reference key="1">
    <citation type="journal article" date="2002" name="Proc. Natl. Acad. Sci. U.S.A.">
        <title>The Brucella suis genome reveals fundamental similarities between animal and plant pathogens and symbionts.</title>
        <authorList>
            <person name="Paulsen I.T."/>
            <person name="Seshadri R."/>
            <person name="Nelson K.E."/>
            <person name="Eisen J.A."/>
            <person name="Heidelberg J.F."/>
            <person name="Read T.D."/>
            <person name="Dodson R.J."/>
            <person name="Umayam L.A."/>
            <person name="Brinkac L.M."/>
            <person name="Beanan M.J."/>
            <person name="Daugherty S.C."/>
            <person name="DeBoy R.T."/>
            <person name="Durkin A.S."/>
            <person name="Kolonay J.F."/>
            <person name="Madupu R."/>
            <person name="Nelson W.C."/>
            <person name="Ayodeji B."/>
            <person name="Kraul M."/>
            <person name="Shetty J."/>
            <person name="Malek J.A."/>
            <person name="Van Aken S.E."/>
            <person name="Riedmuller S."/>
            <person name="Tettelin H."/>
            <person name="Gill S.R."/>
            <person name="White O."/>
            <person name="Salzberg S.L."/>
            <person name="Hoover D.L."/>
            <person name="Lindler L.E."/>
            <person name="Halling S.M."/>
            <person name="Boyle S.M."/>
            <person name="Fraser C.M."/>
        </authorList>
    </citation>
    <scope>NUCLEOTIDE SEQUENCE [LARGE SCALE GENOMIC DNA]</scope>
    <source>
        <strain>1330</strain>
    </source>
</reference>
<reference key="2">
    <citation type="journal article" date="2011" name="J. Bacteriol.">
        <title>Revised genome sequence of Brucella suis 1330.</title>
        <authorList>
            <person name="Tae H."/>
            <person name="Shallom S."/>
            <person name="Settlage R."/>
            <person name="Preston D."/>
            <person name="Adams L.G."/>
            <person name="Garner H.R."/>
        </authorList>
    </citation>
    <scope>NUCLEOTIDE SEQUENCE [LARGE SCALE GENOMIC DNA]</scope>
    <source>
        <strain>1330</strain>
    </source>
</reference>
<sequence length="254" mass="26485">MTPGIRPLVAGNWKMNGKGESLTELRAIAAGLSSDLGRKLDAVICVPATLLSRAAETLEGETVGLGGQDAHFKTSGAHTGDISPEMLKEAGATHVILGHSERRTDHHESNKLICAKTEAAWAAGLVAIVCVGETASERKAERALDVIGDQLSGSLPDGVTAENTIIAYEPVWAIGTGLTPTVQDVRAAHAFMREQLIERFGAKGAHLRLLYGGSVKPSNAAELLGVADVDGALVGGASLKAADFLAICETYRNL</sequence>
<organism>
    <name type="scientific">Brucella suis biovar 1 (strain 1330)</name>
    <dbReference type="NCBI Taxonomy" id="204722"/>
    <lineage>
        <taxon>Bacteria</taxon>
        <taxon>Pseudomonadati</taxon>
        <taxon>Pseudomonadota</taxon>
        <taxon>Alphaproteobacteria</taxon>
        <taxon>Hyphomicrobiales</taxon>
        <taxon>Brucellaceae</taxon>
        <taxon>Brucella/Ochrobactrum group</taxon>
        <taxon>Brucella</taxon>
    </lineage>
</organism>
<feature type="chain" id="PRO_0000090193" description="Triosephosphate isomerase">
    <location>
        <begin position="1"/>
        <end position="254"/>
    </location>
</feature>
<feature type="active site" description="Electrophile" evidence="1">
    <location>
        <position position="99"/>
    </location>
</feature>
<feature type="active site" description="Proton acceptor" evidence="1">
    <location>
        <position position="169"/>
    </location>
</feature>
<feature type="binding site" evidence="1">
    <location>
        <begin position="12"/>
        <end position="14"/>
    </location>
    <ligand>
        <name>substrate</name>
    </ligand>
</feature>
<feature type="binding site" evidence="1">
    <location>
        <position position="175"/>
    </location>
    <ligand>
        <name>substrate</name>
    </ligand>
</feature>
<feature type="binding site" evidence="1">
    <location>
        <position position="214"/>
    </location>
    <ligand>
        <name>substrate</name>
    </ligand>
</feature>
<feature type="binding site" evidence="1">
    <location>
        <begin position="235"/>
        <end position="236"/>
    </location>
    <ligand>
        <name>substrate</name>
    </ligand>
</feature>